<dbReference type="EMBL" id="AAFI02000003">
    <property type="protein sequence ID" value="EAL73438.1"/>
    <property type="molecule type" value="Genomic_DNA"/>
</dbReference>
<dbReference type="RefSeq" id="XP_647455.1">
    <property type="nucleotide sequence ID" value="XM_642363.1"/>
</dbReference>
<dbReference type="PaxDb" id="44689-DDB0189684"/>
<dbReference type="EnsemblProtists" id="EAL73438">
    <property type="protein sequence ID" value="EAL73438"/>
    <property type="gene ID" value="DDB_G0267970"/>
</dbReference>
<dbReference type="GeneID" id="8616262"/>
<dbReference type="KEGG" id="ddi:DDB_G0267970"/>
<dbReference type="dictyBase" id="DDB_G0267970"/>
<dbReference type="HOGENOM" id="CLU_3072681_0_0_1"/>
<dbReference type="InParanoid" id="Q55FS8"/>
<dbReference type="PRO" id="PR:Q55FS8"/>
<dbReference type="Proteomes" id="UP000002195">
    <property type="component" value="Chromosome 1"/>
</dbReference>
<reference key="1">
    <citation type="journal article" date="2005" name="Nature">
        <title>The genome of the social amoeba Dictyostelium discoideum.</title>
        <authorList>
            <person name="Eichinger L."/>
            <person name="Pachebat J.A."/>
            <person name="Gloeckner G."/>
            <person name="Rajandream M.A."/>
            <person name="Sucgang R."/>
            <person name="Berriman M."/>
            <person name="Song J."/>
            <person name="Olsen R."/>
            <person name="Szafranski K."/>
            <person name="Xu Q."/>
            <person name="Tunggal B."/>
            <person name="Kummerfeld S."/>
            <person name="Madera M."/>
            <person name="Konfortov B.A."/>
            <person name="Rivero F."/>
            <person name="Bankier A.T."/>
            <person name="Lehmann R."/>
            <person name="Hamlin N."/>
            <person name="Davies R."/>
            <person name="Gaudet P."/>
            <person name="Fey P."/>
            <person name="Pilcher K."/>
            <person name="Chen G."/>
            <person name="Saunders D."/>
            <person name="Sodergren E.J."/>
            <person name="Davis P."/>
            <person name="Kerhornou A."/>
            <person name="Nie X."/>
            <person name="Hall N."/>
            <person name="Anjard C."/>
            <person name="Hemphill L."/>
            <person name="Bason N."/>
            <person name="Farbrother P."/>
            <person name="Desany B."/>
            <person name="Just E."/>
            <person name="Morio T."/>
            <person name="Rost R."/>
            <person name="Churcher C.M."/>
            <person name="Cooper J."/>
            <person name="Haydock S."/>
            <person name="van Driessche N."/>
            <person name="Cronin A."/>
            <person name="Goodhead I."/>
            <person name="Muzny D.M."/>
            <person name="Mourier T."/>
            <person name="Pain A."/>
            <person name="Lu M."/>
            <person name="Harper D."/>
            <person name="Lindsay R."/>
            <person name="Hauser H."/>
            <person name="James K.D."/>
            <person name="Quiles M."/>
            <person name="Madan Babu M."/>
            <person name="Saito T."/>
            <person name="Buchrieser C."/>
            <person name="Wardroper A."/>
            <person name="Felder M."/>
            <person name="Thangavelu M."/>
            <person name="Johnson D."/>
            <person name="Knights A."/>
            <person name="Loulseged H."/>
            <person name="Mungall K.L."/>
            <person name="Oliver K."/>
            <person name="Price C."/>
            <person name="Quail M.A."/>
            <person name="Urushihara H."/>
            <person name="Hernandez J."/>
            <person name="Rabbinowitsch E."/>
            <person name="Steffen D."/>
            <person name="Sanders M."/>
            <person name="Ma J."/>
            <person name="Kohara Y."/>
            <person name="Sharp S."/>
            <person name="Simmonds M.N."/>
            <person name="Spiegler S."/>
            <person name="Tivey A."/>
            <person name="Sugano S."/>
            <person name="White B."/>
            <person name="Walker D."/>
            <person name="Woodward J.R."/>
            <person name="Winckler T."/>
            <person name="Tanaka Y."/>
            <person name="Shaulsky G."/>
            <person name="Schleicher M."/>
            <person name="Weinstock G.M."/>
            <person name="Rosenthal A."/>
            <person name="Cox E.C."/>
            <person name="Chisholm R.L."/>
            <person name="Gibbs R.A."/>
            <person name="Loomis W.F."/>
            <person name="Platzer M."/>
            <person name="Kay R.R."/>
            <person name="Williams J.G."/>
            <person name="Dear P.H."/>
            <person name="Noegel A.A."/>
            <person name="Barrell B.G."/>
            <person name="Kuspa A."/>
        </authorList>
    </citation>
    <scope>NUCLEOTIDE SEQUENCE [LARGE SCALE GENOMIC DNA]</scope>
    <source>
        <strain>AX4</strain>
    </source>
</reference>
<protein>
    <recommendedName>
        <fullName>Putative uncharacterized protein DDB_G0267970</fullName>
    </recommendedName>
</protein>
<organism>
    <name type="scientific">Dictyostelium discoideum</name>
    <name type="common">Social amoeba</name>
    <dbReference type="NCBI Taxonomy" id="44689"/>
    <lineage>
        <taxon>Eukaryota</taxon>
        <taxon>Amoebozoa</taxon>
        <taxon>Evosea</taxon>
        <taxon>Eumycetozoa</taxon>
        <taxon>Dictyostelia</taxon>
        <taxon>Dictyosteliales</taxon>
        <taxon>Dictyosteliaceae</taxon>
        <taxon>Dictyostelium</taxon>
    </lineage>
</organism>
<accession>Q55FS8</accession>
<gene>
    <name type="ORF">DDB_G0267970</name>
</gene>
<feature type="chain" id="PRO_0000348208" description="Putative uncharacterized protein DDB_G0267970">
    <location>
        <begin position="1"/>
        <end position="53"/>
    </location>
</feature>
<sequence>MKSNNKNLEIEIITIFYTNLISRTIYIPASSNSSGSSGLFASSGSFDSFGYFF</sequence>
<keyword id="KW-1185">Reference proteome</keyword>
<name>Y9684_DICDI</name>
<proteinExistence type="predicted"/>